<evidence type="ECO:0000255" key="1">
    <source>
        <dbReference type="HAMAP-Rule" id="MF_00580"/>
    </source>
</evidence>
<comment type="function">
    <text evidence="1">Together with the chaperonin GroEL, plays an essential role in assisting protein folding. The GroEL-GroES system forms a nano-cage that allows encapsulation of the non-native substrate proteins and provides a physical environment optimized to promote and accelerate protein folding. GroES binds to the apical surface of the GroEL ring, thereby capping the opening of the GroEL channel.</text>
</comment>
<comment type="subunit">
    <text evidence="1">Heptamer of 7 subunits arranged in a ring. Interacts with the chaperonin GroEL.</text>
</comment>
<comment type="subcellular location">
    <subcellularLocation>
        <location evidence="1">Cytoplasm</location>
    </subcellularLocation>
</comment>
<comment type="similarity">
    <text evidence="1">Belongs to the GroES chaperonin family.</text>
</comment>
<reference key="1">
    <citation type="journal article" date="2009" name="BMC Genomics">
        <title>Genome evolution driven by host adaptations results in a more virulent and antimicrobial-resistant Streptococcus pneumoniae serotype 14.</title>
        <authorList>
            <person name="Ding F."/>
            <person name="Tang P."/>
            <person name="Hsu M.-H."/>
            <person name="Cui P."/>
            <person name="Hu S."/>
            <person name="Yu J."/>
            <person name="Chiu C.-H."/>
        </authorList>
    </citation>
    <scope>NUCLEOTIDE SEQUENCE [LARGE SCALE GENOMIC DNA]</scope>
    <source>
        <strain>CGSP14</strain>
    </source>
</reference>
<feature type="chain" id="PRO_1000129714" description="Co-chaperonin GroES">
    <location>
        <begin position="1"/>
        <end position="94"/>
    </location>
</feature>
<organism>
    <name type="scientific">Streptococcus pneumoniae (strain CGSP14)</name>
    <dbReference type="NCBI Taxonomy" id="516950"/>
    <lineage>
        <taxon>Bacteria</taxon>
        <taxon>Bacillati</taxon>
        <taxon>Bacillota</taxon>
        <taxon>Bacilli</taxon>
        <taxon>Lactobacillales</taxon>
        <taxon>Streptococcaceae</taxon>
        <taxon>Streptococcus</taxon>
    </lineage>
</organism>
<sequence>MLKPLGGRVALKIEEKGPTVGGFVLAGSAQEKTQTAQVVATGQGVCTLNGDLVAPSVKTGDRVLVEAHAGFDVKDGDEKYIIVGEANILAIIEE</sequence>
<proteinExistence type="inferred from homology"/>
<dbReference type="EMBL" id="CP001033">
    <property type="protein sequence ID" value="ACB91134.1"/>
    <property type="molecule type" value="Genomic_DNA"/>
</dbReference>
<dbReference type="RefSeq" id="WP_000917343.1">
    <property type="nucleotide sequence ID" value="NC_010582.1"/>
</dbReference>
<dbReference type="SMR" id="B2ILZ6"/>
<dbReference type="KEGG" id="spw:SPCG_1882"/>
<dbReference type="HOGENOM" id="CLU_132825_1_2_9"/>
<dbReference type="GO" id="GO:0005737">
    <property type="term" value="C:cytoplasm"/>
    <property type="evidence" value="ECO:0007669"/>
    <property type="project" value="UniProtKB-SubCell"/>
</dbReference>
<dbReference type="GO" id="GO:0005524">
    <property type="term" value="F:ATP binding"/>
    <property type="evidence" value="ECO:0007669"/>
    <property type="project" value="InterPro"/>
</dbReference>
<dbReference type="GO" id="GO:0046872">
    <property type="term" value="F:metal ion binding"/>
    <property type="evidence" value="ECO:0007669"/>
    <property type="project" value="TreeGrafter"/>
</dbReference>
<dbReference type="GO" id="GO:0044183">
    <property type="term" value="F:protein folding chaperone"/>
    <property type="evidence" value="ECO:0007669"/>
    <property type="project" value="InterPro"/>
</dbReference>
<dbReference type="GO" id="GO:0051087">
    <property type="term" value="F:protein-folding chaperone binding"/>
    <property type="evidence" value="ECO:0007669"/>
    <property type="project" value="TreeGrafter"/>
</dbReference>
<dbReference type="GO" id="GO:0051082">
    <property type="term" value="F:unfolded protein binding"/>
    <property type="evidence" value="ECO:0007669"/>
    <property type="project" value="TreeGrafter"/>
</dbReference>
<dbReference type="GO" id="GO:0051085">
    <property type="term" value="P:chaperone cofactor-dependent protein refolding"/>
    <property type="evidence" value="ECO:0007669"/>
    <property type="project" value="TreeGrafter"/>
</dbReference>
<dbReference type="CDD" id="cd00320">
    <property type="entry name" value="cpn10"/>
    <property type="match status" value="1"/>
</dbReference>
<dbReference type="FunFam" id="2.30.33.40:FF:000007">
    <property type="entry name" value="10 kDa chaperonin"/>
    <property type="match status" value="1"/>
</dbReference>
<dbReference type="Gene3D" id="2.30.33.40">
    <property type="entry name" value="GroES chaperonin"/>
    <property type="match status" value="1"/>
</dbReference>
<dbReference type="HAMAP" id="MF_00580">
    <property type="entry name" value="CH10"/>
    <property type="match status" value="1"/>
</dbReference>
<dbReference type="InterPro" id="IPR020818">
    <property type="entry name" value="Chaperonin_GroES"/>
</dbReference>
<dbReference type="InterPro" id="IPR037124">
    <property type="entry name" value="Chaperonin_GroES_sf"/>
</dbReference>
<dbReference type="InterPro" id="IPR011032">
    <property type="entry name" value="GroES-like_sf"/>
</dbReference>
<dbReference type="NCBIfam" id="NF001528">
    <property type="entry name" value="PRK00364.1-4"/>
    <property type="match status" value="1"/>
</dbReference>
<dbReference type="PANTHER" id="PTHR10772">
    <property type="entry name" value="10 KDA HEAT SHOCK PROTEIN"/>
    <property type="match status" value="1"/>
</dbReference>
<dbReference type="PANTHER" id="PTHR10772:SF58">
    <property type="entry name" value="CO-CHAPERONIN GROES"/>
    <property type="match status" value="1"/>
</dbReference>
<dbReference type="Pfam" id="PF00166">
    <property type="entry name" value="Cpn10"/>
    <property type="match status" value="1"/>
</dbReference>
<dbReference type="PRINTS" id="PR00297">
    <property type="entry name" value="CHAPERONIN10"/>
</dbReference>
<dbReference type="SMART" id="SM00883">
    <property type="entry name" value="Cpn10"/>
    <property type="match status" value="1"/>
</dbReference>
<dbReference type="SUPFAM" id="SSF50129">
    <property type="entry name" value="GroES-like"/>
    <property type="match status" value="1"/>
</dbReference>
<accession>B2ILZ6</accession>
<name>CH10_STRPS</name>
<protein>
    <recommendedName>
        <fullName evidence="1">Co-chaperonin GroES</fullName>
    </recommendedName>
    <alternativeName>
        <fullName evidence="1">10 kDa chaperonin</fullName>
    </alternativeName>
    <alternativeName>
        <fullName evidence="1">Chaperonin-10</fullName>
        <shortName evidence="1">Cpn10</shortName>
    </alternativeName>
</protein>
<keyword id="KW-0143">Chaperone</keyword>
<keyword id="KW-0963">Cytoplasm</keyword>
<gene>
    <name evidence="1" type="primary">groES</name>
    <name evidence="1" type="synonym">groS</name>
    <name type="ordered locus">SPCG_1882</name>
</gene>